<accession>A4W9Z4</accession>
<organism>
    <name type="scientific">Enterobacter sp. (strain 638)</name>
    <dbReference type="NCBI Taxonomy" id="399742"/>
    <lineage>
        <taxon>Bacteria</taxon>
        <taxon>Pseudomonadati</taxon>
        <taxon>Pseudomonadota</taxon>
        <taxon>Gammaproteobacteria</taxon>
        <taxon>Enterobacterales</taxon>
        <taxon>Enterobacteriaceae</taxon>
        <taxon>Enterobacter</taxon>
    </lineage>
</organism>
<feature type="chain" id="PRO_0000339389" description="Dihydromonapterin reductase">
    <location>
        <begin position="1"/>
        <end position="240"/>
    </location>
</feature>
<feature type="active site" description="Proton acceptor" evidence="2">
    <location>
        <position position="152"/>
    </location>
</feature>
<dbReference type="EC" id="1.5.1.50" evidence="1"/>
<dbReference type="EC" id="1.5.1.3" evidence="1"/>
<dbReference type="EMBL" id="CP000653">
    <property type="protein sequence ID" value="ABP60524.1"/>
    <property type="molecule type" value="Genomic_DNA"/>
</dbReference>
<dbReference type="RefSeq" id="WP_012017239.1">
    <property type="nucleotide sequence ID" value="NC_009436.1"/>
</dbReference>
<dbReference type="SMR" id="A4W9Z4"/>
<dbReference type="STRING" id="399742.Ent638_1846"/>
<dbReference type="KEGG" id="ent:Ent638_1846"/>
<dbReference type="eggNOG" id="COG1028">
    <property type="taxonomic scope" value="Bacteria"/>
</dbReference>
<dbReference type="HOGENOM" id="CLU_010194_1_3_6"/>
<dbReference type="OrthoDB" id="9793499at2"/>
<dbReference type="Proteomes" id="UP000000230">
    <property type="component" value="Chromosome"/>
</dbReference>
<dbReference type="GO" id="GO:0004146">
    <property type="term" value="F:dihydrofolate reductase activity"/>
    <property type="evidence" value="ECO:0007669"/>
    <property type="project" value="UniProtKB-EC"/>
</dbReference>
<dbReference type="GO" id="GO:0006730">
    <property type="term" value="P:one-carbon metabolic process"/>
    <property type="evidence" value="ECO:0007669"/>
    <property type="project" value="UniProtKB-KW"/>
</dbReference>
<dbReference type="Gene3D" id="3.40.50.720">
    <property type="entry name" value="NAD(P)-binding Rossmann-like Domain"/>
    <property type="match status" value="1"/>
</dbReference>
<dbReference type="InterPro" id="IPR036291">
    <property type="entry name" value="NAD(P)-bd_dom_sf"/>
</dbReference>
<dbReference type="InterPro" id="IPR020904">
    <property type="entry name" value="Sc_DH/Rdtase_CS"/>
</dbReference>
<dbReference type="InterPro" id="IPR002347">
    <property type="entry name" value="SDR_fam"/>
</dbReference>
<dbReference type="NCBIfam" id="NF005066">
    <property type="entry name" value="PRK06483.1"/>
    <property type="match status" value="1"/>
</dbReference>
<dbReference type="PANTHER" id="PTHR43639:SF6">
    <property type="entry name" value="DIHYDROMONAPTERIN REDUCTASE"/>
    <property type="match status" value="1"/>
</dbReference>
<dbReference type="PANTHER" id="PTHR43639">
    <property type="entry name" value="OXIDOREDUCTASE, SHORT-CHAIN DEHYDROGENASE/REDUCTASE FAMILY (AFU_ORTHOLOGUE AFUA_5G02870)"/>
    <property type="match status" value="1"/>
</dbReference>
<dbReference type="Pfam" id="PF13561">
    <property type="entry name" value="adh_short_C2"/>
    <property type="match status" value="1"/>
</dbReference>
<dbReference type="PRINTS" id="PR00081">
    <property type="entry name" value="GDHRDH"/>
</dbReference>
<dbReference type="SUPFAM" id="SSF51735">
    <property type="entry name" value="NAD(P)-binding Rossmann-fold domains"/>
    <property type="match status" value="1"/>
</dbReference>
<dbReference type="PROSITE" id="PS00061">
    <property type="entry name" value="ADH_SHORT"/>
    <property type="match status" value="1"/>
</dbReference>
<proteinExistence type="inferred from homology"/>
<evidence type="ECO:0000250" key="1">
    <source>
        <dbReference type="UniProtKB" id="P0AFS3"/>
    </source>
</evidence>
<evidence type="ECO:0000255" key="2">
    <source>
        <dbReference type="PROSITE-ProRule" id="PRU10001"/>
    </source>
</evidence>
<evidence type="ECO:0000305" key="3"/>
<protein>
    <recommendedName>
        <fullName>Dihydromonapterin reductase</fullName>
        <shortName>H(2)-MPt reductase</shortName>
        <ecNumber evidence="1">1.5.1.50</ecNumber>
    </recommendedName>
    <alternativeName>
        <fullName>Dihydrofolate reductase</fullName>
        <shortName>DHFR</shortName>
        <ecNumber evidence="1">1.5.1.3</ecNumber>
    </alternativeName>
</protein>
<comment type="function">
    <text evidence="1">Catalyzes the reduction of dihydromonapterin to tetrahydromonapterin. Also has lower activity with dihydrofolate.</text>
</comment>
<comment type="catalytic activity">
    <reaction evidence="1">
        <text>(6S)-5,6,7,8-tetrahydrofolate + NADP(+) = 7,8-dihydrofolate + NADPH + H(+)</text>
        <dbReference type="Rhea" id="RHEA:15009"/>
        <dbReference type="ChEBI" id="CHEBI:15378"/>
        <dbReference type="ChEBI" id="CHEBI:57451"/>
        <dbReference type="ChEBI" id="CHEBI:57453"/>
        <dbReference type="ChEBI" id="CHEBI:57783"/>
        <dbReference type="ChEBI" id="CHEBI:58349"/>
        <dbReference type="EC" id="1.5.1.3"/>
    </reaction>
</comment>
<comment type="catalytic activity">
    <reaction evidence="1">
        <text>7,8-dihydromonapterin + NADPH + H(+) = 5,6,7,8-tetrahydromonapterin + NADP(+)</text>
        <dbReference type="Rhea" id="RHEA:34847"/>
        <dbReference type="ChEBI" id="CHEBI:15378"/>
        <dbReference type="ChEBI" id="CHEBI:57783"/>
        <dbReference type="ChEBI" id="CHEBI:58349"/>
        <dbReference type="ChEBI" id="CHEBI:71175"/>
        <dbReference type="ChEBI" id="CHEBI:71177"/>
        <dbReference type="EC" id="1.5.1.50"/>
    </reaction>
</comment>
<comment type="similarity">
    <text evidence="3">Belongs to the short-chain dehydrogenases/reductases (SDR) family. FolM subfamily.</text>
</comment>
<keyword id="KW-0521">NADP</keyword>
<keyword id="KW-0554">One-carbon metabolism</keyword>
<keyword id="KW-0560">Oxidoreductase</keyword>
<reference key="1">
    <citation type="journal article" date="2010" name="PLoS Genet.">
        <title>Genome sequence of the plant growth promoting endophytic bacterium Enterobacter sp. 638.</title>
        <authorList>
            <person name="Taghavi S."/>
            <person name="van der Lelie D."/>
            <person name="Hoffman A."/>
            <person name="Zhang Y.B."/>
            <person name="Walla M.D."/>
            <person name="Vangronsveld J."/>
            <person name="Newman L."/>
            <person name="Monchy S."/>
        </authorList>
    </citation>
    <scope>NUCLEOTIDE SEQUENCE [LARGE SCALE GENOMIC DNA]</scope>
    <source>
        <strain>638</strain>
    </source>
</reference>
<sequence length="240" mass="26370">MGNAPQRPILITGGGRRIGLALAHHFLTLRQPVIVSYRNEYPSIEGLRQAGATCIQADFSTDEGILRFAETVKSNTRGLRAIIHNASAWQAEKPGTPLSETLACMMQIHVHAPYLLNHALEELLRGHGHAAGDIIHFTDYVVERGSDKHIAYAASKAALDNMTRSFARKLAPEVKVNAIAPSLILFNEEDDAEYRQKALNKSLMKIVPGEKEVIDLIDYLLTSCYVTGRSFGVDGGRPLN</sequence>
<gene>
    <name type="primary">folM</name>
    <name type="ordered locus">Ent638_1846</name>
</gene>
<name>FOLM_ENT38</name>